<reference key="1">
    <citation type="journal article" date="2005" name="Genome Biol.">
        <title>Full-length cDNAs from chicken bursal lymphocytes to facilitate gene function analysis.</title>
        <authorList>
            <person name="Caldwell R.B."/>
            <person name="Kierzek A.M."/>
            <person name="Arakawa H."/>
            <person name="Bezzubov Y."/>
            <person name="Zaim J."/>
            <person name="Fiedler P."/>
            <person name="Kutter S."/>
            <person name="Blagodatski A."/>
            <person name="Kostovska D."/>
            <person name="Koter M."/>
            <person name="Plachy J."/>
            <person name="Carninci P."/>
            <person name="Hayashizaki Y."/>
            <person name="Buerstedde J.-M."/>
        </authorList>
    </citation>
    <scope>NUCLEOTIDE SEQUENCE [LARGE SCALE MRNA]</scope>
    <source>
        <strain>CB</strain>
        <tissue>Bursa of Fabricius</tissue>
    </source>
</reference>
<organism>
    <name type="scientific">Gallus gallus</name>
    <name type="common">Chicken</name>
    <dbReference type="NCBI Taxonomy" id="9031"/>
    <lineage>
        <taxon>Eukaryota</taxon>
        <taxon>Metazoa</taxon>
        <taxon>Chordata</taxon>
        <taxon>Craniata</taxon>
        <taxon>Vertebrata</taxon>
        <taxon>Euteleostomi</taxon>
        <taxon>Archelosauria</taxon>
        <taxon>Archosauria</taxon>
        <taxon>Dinosauria</taxon>
        <taxon>Saurischia</taxon>
        <taxon>Theropoda</taxon>
        <taxon>Coelurosauria</taxon>
        <taxon>Aves</taxon>
        <taxon>Neognathae</taxon>
        <taxon>Galloanserae</taxon>
        <taxon>Galliformes</taxon>
        <taxon>Phasianidae</taxon>
        <taxon>Phasianinae</taxon>
        <taxon>Gallus</taxon>
    </lineage>
</organism>
<protein>
    <recommendedName>
        <fullName>Serine/threonine-protein phosphatase 6 regulatory subunit 3</fullName>
    </recommendedName>
    <alternativeName>
        <fullName>SAPS domain family member 3</fullName>
    </alternativeName>
</protein>
<gene>
    <name type="primary">PPP6R3</name>
    <name type="synonym">PP6R3</name>
    <name type="synonym">SAPS3</name>
    <name type="ORF">RCJMB04_2j4</name>
</gene>
<keyword id="KW-1185">Reference proteome</keyword>
<proteinExistence type="evidence at transcript level"/>
<name>PP6R3_CHICK</name>
<evidence type="ECO:0000250" key="1"/>
<evidence type="ECO:0000256" key="2">
    <source>
        <dbReference type="SAM" id="MobiDB-lite"/>
    </source>
</evidence>
<evidence type="ECO:0000305" key="3"/>
<accession>Q5F471</accession>
<dbReference type="EMBL" id="AJ851429">
    <property type="protein sequence ID" value="CAH65063.1"/>
    <property type="molecule type" value="mRNA"/>
</dbReference>
<dbReference type="RefSeq" id="NP_001026354.1">
    <property type="nucleotide sequence ID" value="NM_001031183.2"/>
</dbReference>
<dbReference type="RefSeq" id="NP_001384024.1">
    <property type="nucleotide sequence ID" value="NM_001397095.1"/>
</dbReference>
<dbReference type="RefSeq" id="NP_001384025.1">
    <property type="nucleotide sequence ID" value="NM_001397096.1"/>
</dbReference>
<dbReference type="RefSeq" id="NP_001384026.1">
    <property type="nucleotide sequence ID" value="NM_001397097.1"/>
</dbReference>
<dbReference type="FunCoup" id="Q5F471">
    <property type="interactions" value="2640"/>
</dbReference>
<dbReference type="STRING" id="9031.ENSGALP00000067566"/>
<dbReference type="PaxDb" id="9031-ENSGALP00000032046"/>
<dbReference type="GeneID" id="423116"/>
<dbReference type="KEGG" id="gga:423116"/>
<dbReference type="CTD" id="55291"/>
<dbReference type="VEuPathDB" id="HostDB:geneid_423116"/>
<dbReference type="eggNOG" id="KOG2073">
    <property type="taxonomic scope" value="Eukaryota"/>
</dbReference>
<dbReference type="HOGENOM" id="CLU_012598_0_1_1"/>
<dbReference type="InParanoid" id="Q5F471"/>
<dbReference type="OrthoDB" id="295029at2759"/>
<dbReference type="PhylomeDB" id="Q5F471"/>
<dbReference type="TreeFam" id="TF313227"/>
<dbReference type="Reactome" id="R-GGA-204005">
    <property type="pathway name" value="COPII-mediated vesicle transport"/>
</dbReference>
<dbReference type="PRO" id="PR:Q5F471"/>
<dbReference type="Proteomes" id="UP000000539">
    <property type="component" value="Chromosome 5"/>
</dbReference>
<dbReference type="Bgee" id="ENSGALG00000007037">
    <property type="expression patterns" value="Expressed in testis and 12 other cell types or tissues"/>
</dbReference>
<dbReference type="GO" id="GO:0005829">
    <property type="term" value="C:cytosol"/>
    <property type="evidence" value="ECO:0000318"/>
    <property type="project" value="GO_Central"/>
</dbReference>
<dbReference type="GO" id="GO:0005634">
    <property type="term" value="C:nucleus"/>
    <property type="evidence" value="ECO:0000318"/>
    <property type="project" value="GO_Central"/>
</dbReference>
<dbReference type="GO" id="GO:0019903">
    <property type="term" value="F:protein phosphatase binding"/>
    <property type="evidence" value="ECO:0007669"/>
    <property type="project" value="InterPro"/>
</dbReference>
<dbReference type="GO" id="GO:0019888">
    <property type="term" value="F:protein phosphatase regulator activity"/>
    <property type="evidence" value="ECO:0000318"/>
    <property type="project" value="GO_Central"/>
</dbReference>
<dbReference type="GO" id="GO:0009966">
    <property type="term" value="P:regulation of signal transduction"/>
    <property type="evidence" value="ECO:0000318"/>
    <property type="project" value="GO_Central"/>
</dbReference>
<dbReference type="InterPro" id="IPR016024">
    <property type="entry name" value="ARM-type_fold"/>
</dbReference>
<dbReference type="InterPro" id="IPR007587">
    <property type="entry name" value="SAPS"/>
</dbReference>
<dbReference type="PANTHER" id="PTHR12634:SF12">
    <property type="entry name" value="SERINE_THREONINE-PROTEIN PHOSPHATASE 6 REGULATORY SUBUNIT 3"/>
    <property type="match status" value="1"/>
</dbReference>
<dbReference type="PANTHER" id="PTHR12634">
    <property type="entry name" value="SIT4 YEAST -ASSOCIATING PROTEIN-RELATED"/>
    <property type="match status" value="1"/>
</dbReference>
<dbReference type="Pfam" id="PF04499">
    <property type="entry name" value="SAPS"/>
    <property type="match status" value="2"/>
</dbReference>
<dbReference type="SUPFAM" id="SSF48371">
    <property type="entry name" value="ARM repeat"/>
    <property type="match status" value="1"/>
</dbReference>
<feature type="chain" id="PRO_0000046102" description="Serine/threonine-protein phosphatase 6 regulatory subunit 3">
    <location>
        <begin position="1"/>
        <end position="873"/>
    </location>
</feature>
<feature type="region of interest" description="Disordered" evidence="2">
    <location>
        <begin position="628"/>
        <end position="659"/>
    </location>
</feature>
<feature type="region of interest" description="Disordered" evidence="2">
    <location>
        <begin position="693"/>
        <end position="715"/>
    </location>
</feature>
<feature type="region of interest" description="Disordered" evidence="2">
    <location>
        <begin position="729"/>
        <end position="755"/>
    </location>
</feature>
<feature type="region of interest" description="Disordered" evidence="2">
    <location>
        <begin position="767"/>
        <end position="787"/>
    </location>
</feature>
<feature type="region of interest" description="Disordered" evidence="2">
    <location>
        <begin position="840"/>
        <end position="873"/>
    </location>
</feature>
<feature type="compositionally biased region" description="Acidic residues" evidence="2">
    <location>
        <begin position="644"/>
        <end position="655"/>
    </location>
</feature>
<feature type="compositionally biased region" description="Low complexity" evidence="2">
    <location>
        <begin position="729"/>
        <end position="739"/>
    </location>
</feature>
<sequence>MFWKFDLHSSSHIDTLLEREDVTLKELMDEEDVLQECKAQNRKLIEFLLKSECLEDLVSFIIEEPPQDMDEKIRYKYPNISCELLTSDVSQINDRLGEEESLLMKLYSFLLNESPLNPLLASFFSKVLSILISRKPEQIVDFLKKKHDFVDLVIKHIGTSAIMDLLLRLLTCIEPPQPRQEVLNWLNEERIIQRLVEIVHPSQDEDRHSNASQSLCEIIRLSRDQMLQVQNSSEPDPLLASLEKREIIEQLLSNIFHKEKNESAIVSAIQILLTLLETRRQTFEGHIEICPPGMSNSTYSVNKSVLEAIKARLSSFHELLLEPPKKSVMKTTWGVLDPPVGNTRLNVIRLISSLLQTNTSSVNQELIELNSIGVILDMFFKYTWNNFLHTQVEICIALILASPLESTENGTITDQDSTGDNLLLKHLFLKCQLIERILEAWEMNEKKQAEGGRRHGYMGHLTRIANCIVHSTDKGPNSTLVQQLIKELPEEVRERWETFCTSSLGETNKRNTVDLVTTCHIHSSSDDEIDFKETGFSQDSSLQQAFSDYQMQQMTSNFIDQFGFNDEKFADQDDIGNVSFDRVSDINFTLNTNESGNIALFEACCKERIQQFDDGGSDEEDIWEEKHIAFTPESQRRSSSGSTDSEESTDSEEEDGTKQDLFESHANTEDKMEVDLNEPPNWSANFDVPMETAHGTNLDSVGSDVWSTEEPMPAKETGWASFSEFTSSLSSTDSLRSNSPVEMETNTEPMDPLSANATGLATQLETPGSVAMEASSDGEEDAENADKVTETVMNGSMKETLSLTVDAKTETAVFKSEEGKLSTSQDASCKYVVEENAEVAEEAPSALQPANSSPEQRTDQRTLLGETSVNGPV</sequence>
<comment type="function">
    <text evidence="1">Regulatory subunit of protein phosphatase 6 (PP6). May function as a scaffolding PP6 subunit (By similarity).</text>
</comment>
<comment type="subunit">
    <text evidence="1">Protein phosphatase 6 (PP6) holoenzyme is proposed to be a heterotrimeric complex formed by the catalytic subunit, a SAPS domain-containing subunit (PP6R) and an ankyrin repeat-domain containing regulatory subunit (ARS).</text>
</comment>
<comment type="similarity">
    <text evidence="3">Belongs to the SAPS family.</text>
</comment>